<reference key="1">
    <citation type="journal article" date="2001" name="DNA Res.">
        <title>Complete genome sequence of enterohemorrhagic Escherichia coli O157:H7 and genomic comparison with a laboratory strain K-12.</title>
        <authorList>
            <person name="Hayashi T."/>
            <person name="Makino K."/>
            <person name="Ohnishi M."/>
            <person name="Kurokawa K."/>
            <person name="Ishii K."/>
            <person name="Yokoyama K."/>
            <person name="Han C.-G."/>
            <person name="Ohtsubo E."/>
            <person name="Nakayama K."/>
            <person name="Murata T."/>
            <person name="Tanaka M."/>
            <person name="Tobe T."/>
            <person name="Iida T."/>
            <person name="Takami H."/>
            <person name="Honda T."/>
            <person name="Sasakawa C."/>
            <person name="Ogasawara N."/>
            <person name="Yasunaga T."/>
            <person name="Kuhara S."/>
            <person name="Shiba T."/>
            <person name="Hattori M."/>
            <person name="Shinagawa H."/>
        </authorList>
    </citation>
    <scope>NUCLEOTIDE SEQUENCE [LARGE SCALE GENOMIC DNA]</scope>
    <source>
        <strain evidence="6">O157:H7 / Sakai / RIMD 0509952 / EHEC</strain>
    </source>
</reference>
<reference evidence="7" key="2">
    <citation type="journal article" date="2014" name="PLoS Pathog.">
        <title>Structure and specificity of the bacterial cysteine methyltransferase effector NleE suggests a novel substrate in human DNA repair pathway.</title>
        <authorList>
            <person name="Yao Q."/>
            <person name="Zhang L."/>
            <person name="Wan X."/>
            <person name="Chen J."/>
            <person name="Hu L."/>
            <person name="Ding X."/>
            <person name="Li L."/>
            <person name="Karar J."/>
            <person name="Peng H."/>
            <person name="Chen S."/>
            <person name="Huang N."/>
            <person name="Rauscher F.J. III"/>
            <person name="Shao F."/>
        </authorList>
    </citation>
    <scope>X-RAY CRYSTALLOGRAPHY (2.31 ANGSTROMS) IN COMPLEX WITH S-ADENOSYL-L-METHIONINE</scope>
    <scope>SUBUNIT</scope>
</reference>
<comment type="function">
    <text evidence="1">Cysteine methyltransferase effector that inhibits host cell NF-kappa-B activation by preventing nuclear translocation of host protein RELA/p65. Acts by mediating cysteine methylation of host proteins TAB2 and TAB3: methylation of a conserved cysteine residue of the RanBP2-type zinc finger (NZF) of TAB2 and TAB3 disrupts zinc-binding, thereby inactivating the ubiquitin chain-binding activity of TAB2 and TAB3, leading to NF-kappa-B inactivation. Also mediates cysteine methylation of host protein ZRANB3, inactivating its ability to bind ubiquitin chains.</text>
</comment>
<comment type="catalytic activity">
    <reaction evidence="1">
        <text>L-cysteinyl-[protein] + S-adenosyl-L-methionine = S-methyl-L-cysteinyl-[protein] + S-adenosyl-L-homocysteine + H(+)</text>
        <dbReference type="Rhea" id="RHEA:66544"/>
        <dbReference type="Rhea" id="RHEA-COMP:10131"/>
        <dbReference type="Rhea" id="RHEA-COMP:10132"/>
        <dbReference type="ChEBI" id="CHEBI:15378"/>
        <dbReference type="ChEBI" id="CHEBI:29950"/>
        <dbReference type="ChEBI" id="CHEBI:57856"/>
        <dbReference type="ChEBI" id="CHEBI:59789"/>
        <dbReference type="ChEBI" id="CHEBI:82612"/>
    </reaction>
    <physiologicalReaction direction="left-to-right" evidence="1">
        <dbReference type="Rhea" id="RHEA:66545"/>
    </physiologicalReaction>
</comment>
<comment type="subunit">
    <text evidence="2">Monomer.</text>
</comment>
<comment type="subcellular location">
    <subcellularLocation>
        <location evidence="1">Secreted</location>
    </subcellularLocation>
    <subcellularLocation>
        <location evidence="1">Host nucleus</location>
    </subcellularLocation>
    <text evidence="1">Secreted via the type III secretion system (T3SS). Localizes in the nucleus of the infected cells.</text>
</comment>
<comment type="similarity">
    <text evidence="4">Belongs to the NleE/OspZ family.</text>
</comment>
<feature type="chain" id="PRO_0000452525" description="Cysteine S-methyltransferase NleE">
    <location>
        <begin position="1"/>
        <end position="224"/>
    </location>
</feature>
<feature type="region of interest" description="Interaction with host proteins TAB2, TAB3 and ZRANB3" evidence="1">
    <location>
        <begin position="49"/>
        <end position="52"/>
    </location>
</feature>
<feature type="binding site" evidence="2 7">
    <location>
        <position position="92"/>
    </location>
    <ligand>
        <name>S-adenosyl-L-methionine</name>
        <dbReference type="ChEBI" id="CHEBI:59789"/>
    </ligand>
</feature>
<feature type="binding site" evidence="2 7">
    <location>
        <position position="98"/>
    </location>
    <ligand>
        <name>S-adenosyl-L-methionine</name>
        <dbReference type="ChEBI" id="CHEBI:59789"/>
    </ligand>
</feature>
<feature type="binding site" evidence="2 7">
    <location>
        <position position="107"/>
    </location>
    <ligand>
        <name>S-adenosyl-L-methionine</name>
        <dbReference type="ChEBI" id="CHEBI:59789"/>
    </ligand>
</feature>
<feature type="binding site" evidence="2 7">
    <location>
        <position position="111"/>
    </location>
    <ligand>
        <name>S-adenosyl-L-methionine</name>
        <dbReference type="ChEBI" id="CHEBI:59789"/>
    </ligand>
</feature>
<feature type="binding site" evidence="2 7">
    <location>
        <position position="204"/>
    </location>
    <ligand>
        <name>S-adenosyl-L-methionine</name>
        <dbReference type="ChEBI" id="CHEBI:59789"/>
    </ligand>
</feature>
<feature type="binding site" evidence="2 7">
    <location>
        <position position="208"/>
    </location>
    <ligand>
        <name>S-adenosyl-L-methionine</name>
        <dbReference type="ChEBI" id="CHEBI:59789"/>
    </ligand>
</feature>
<feature type="helix" evidence="8">
    <location>
        <begin position="22"/>
        <end position="26"/>
    </location>
</feature>
<feature type="helix" evidence="8">
    <location>
        <begin position="32"/>
        <end position="35"/>
    </location>
</feature>
<feature type="helix" evidence="8">
    <location>
        <begin position="43"/>
        <end position="45"/>
    </location>
</feature>
<feature type="turn" evidence="8">
    <location>
        <begin position="59"/>
        <end position="62"/>
    </location>
</feature>
<feature type="helix" evidence="8">
    <location>
        <begin position="63"/>
        <end position="76"/>
    </location>
</feature>
<feature type="helix" evidence="8">
    <location>
        <begin position="89"/>
        <end position="92"/>
    </location>
</feature>
<feature type="helix" evidence="8">
    <location>
        <begin position="95"/>
        <end position="103"/>
    </location>
</feature>
<feature type="strand" evidence="8">
    <location>
        <begin position="108"/>
        <end position="115"/>
    </location>
</feature>
<feature type="helix" evidence="8">
    <location>
        <begin position="120"/>
        <end position="125"/>
    </location>
</feature>
<feature type="strand" evidence="8">
    <location>
        <begin position="131"/>
        <end position="137"/>
    </location>
</feature>
<feature type="strand" evidence="8">
    <location>
        <begin position="145"/>
        <end position="151"/>
    </location>
</feature>
<feature type="helix" evidence="8">
    <location>
        <begin position="156"/>
        <end position="181"/>
    </location>
</feature>
<feature type="helix" evidence="8">
    <location>
        <begin position="186"/>
        <end position="201"/>
    </location>
</feature>
<feature type="helix" evidence="8">
    <location>
        <begin position="206"/>
        <end position="219"/>
    </location>
</feature>
<accession>Q7DBA6</accession>
<accession>A0A0H3JGS9</accession>
<accession>A0A6M0JHE4</accession>
<accession>Q7AAU9</accession>
<evidence type="ECO:0000250" key="1">
    <source>
        <dbReference type="UniProtKB" id="B7UI22"/>
    </source>
</evidence>
<evidence type="ECO:0000269" key="2">
    <source>
    </source>
</evidence>
<evidence type="ECO:0000303" key="3">
    <source>
    </source>
</evidence>
<evidence type="ECO:0000305" key="4"/>
<evidence type="ECO:0000312" key="5">
    <source>
        <dbReference type="EMBL" id="BAB37281.1"/>
    </source>
</evidence>
<evidence type="ECO:0000312" key="6">
    <source>
        <dbReference type="Proteomes" id="UP000000558"/>
    </source>
</evidence>
<evidence type="ECO:0007744" key="7">
    <source>
        <dbReference type="PDB" id="4R29"/>
    </source>
</evidence>
<evidence type="ECO:0007829" key="8">
    <source>
        <dbReference type="PDB" id="4R29"/>
    </source>
</evidence>
<sequence>MINPVTNTQGVSPINTKYAEHVVKNIYPEIKHDYFNESPNIYDKKYISGITRGVAELKQEEFVNEKARRFSYMKTMYSVCPEAFEPISRNEASTPEGSWLTVISGKRPMGQFSVDSLYNPDLHALCELPDICCKIFPKENNDFLYIVVVYRNDSPLGEQRANRFIELYNIKRDIMQELNYELPELKAVKSEMIIAREMGEIFSYMPGEIDSYMKYINNKLSKIE</sequence>
<organism>
    <name type="scientific">Escherichia coli O157:H7</name>
    <dbReference type="NCBI Taxonomy" id="83334"/>
    <lineage>
        <taxon>Bacteria</taxon>
        <taxon>Pseudomonadati</taxon>
        <taxon>Pseudomonadota</taxon>
        <taxon>Gammaproteobacteria</taxon>
        <taxon>Enterobacterales</taxon>
        <taxon>Enterobacteriaceae</taxon>
        <taxon>Escherichia</taxon>
    </lineage>
</organism>
<name>NLEE_ECO57</name>
<gene>
    <name evidence="3" type="primary">nleE</name>
    <name evidence="5" type="ordered locus">ECs3858</name>
</gene>
<keyword id="KW-0002">3D-structure</keyword>
<keyword id="KW-1048">Host nucleus</keyword>
<keyword id="KW-0489">Methyltransferase</keyword>
<keyword id="KW-1185">Reference proteome</keyword>
<keyword id="KW-0949">S-adenosyl-L-methionine</keyword>
<keyword id="KW-0964">Secreted</keyword>
<keyword id="KW-0800">Toxin</keyword>
<keyword id="KW-0808">Transferase</keyword>
<keyword id="KW-0843">Virulence</keyword>
<proteinExistence type="evidence at protein level"/>
<protein>
    <recommendedName>
        <fullName evidence="4">Cysteine S-methyltransferase NleE</fullName>
        <ecNumber evidence="1">2.1.1.-</ecNumber>
    </recommendedName>
    <alternativeName>
        <fullName evidence="1">Effector protein NleE</fullName>
    </alternativeName>
    <alternativeName>
        <fullName evidence="1">Non-LEE-encoded type III effector E</fullName>
    </alternativeName>
</protein>
<dbReference type="EC" id="2.1.1.-" evidence="1"/>
<dbReference type="EMBL" id="BA000007">
    <property type="protein sequence ID" value="BAB37281.1"/>
    <property type="molecule type" value="Genomic_DNA"/>
</dbReference>
<dbReference type="RefSeq" id="NP_311885.1">
    <property type="nucleotide sequence ID" value="NC_002695.1"/>
</dbReference>
<dbReference type="RefSeq" id="WP_000609742.1">
    <property type="nucleotide sequence ID" value="NZ_VOAI01000047.1"/>
</dbReference>
<dbReference type="PDB" id="4R29">
    <property type="method" value="X-ray"/>
    <property type="resolution" value="2.31 A"/>
    <property type="chains" value="A/B/C/D=1-224"/>
</dbReference>
<dbReference type="PDBsum" id="4R29"/>
<dbReference type="SMR" id="Q7DBA6"/>
<dbReference type="STRING" id="155864.Z4329"/>
<dbReference type="GeneID" id="916318"/>
<dbReference type="KEGG" id="ecs:ECs_3858"/>
<dbReference type="PATRIC" id="fig|386585.9.peg.4026"/>
<dbReference type="eggNOG" id="ENOG5033TQ0">
    <property type="taxonomic scope" value="Bacteria"/>
</dbReference>
<dbReference type="HOGENOM" id="CLU_1347196_0_0_6"/>
<dbReference type="OMA" id="YIIVVFR"/>
<dbReference type="EvolutionaryTrace" id="Q7DBA6"/>
<dbReference type="Proteomes" id="UP000000558">
    <property type="component" value="Chromosome"/>
</dbReference>
<dbReference type="GO" id="GO:0005576">
    <property type="term" value="C:extracellular region"/>
    <property type="evidence" value="ECO:0007669"/>
    <property type="project" value="UniProtKB-SubCell"/>
</dbReference>
<dbReference type="GO" id="GO:0042025">
    <property type="term" value="C:host cell nucleus"/>
    <property type="evidence" value="ECO:0007669"/>
    <property type="project" value="UniProtKB-SubCell"/>
</dbReference>
<dbReference type="GO" id="GO:0008168">
    <property type="term" value="F:methyltransferase activity"/>
    <property type="evidence" value="ECO:0007669"/>
    <property type="project" value="UniProtKB-KW"/>
</dbReference>
<dbReference type="GO" id="GO:0090729">
    <property type="term" value="F:toxin activity"/>
    <property type="evidence" value="ECO:0007669"/>
    <property type="project" value="UniProtKB-KW"/>
</dbReference>
<dbReference type="GO" id="GO:0032259">
    <property type="term" value="P:methylation"/>
    <property type="evidence" value="ECO:0007669"/>
    <property type="project" value="UniProtKB-KW"/>
</dbReference>
<dbReference type="InterPro" id="IPR048901">
    <property type="entry name" value="NleE/OspZ"/>
</dbReference>
<dbReference type="NCBIfam" id="NF033830">
    <property type="entry name" value="NleE_fam_methyl"/>
    <property type="match status" value="1"/>
</dbReference>
<dbReference type="Pfam" id="PF20798">
    <property type="entry name" value="NleE"/>
    <property type="match status" value="1"/>
</dbReference>